<name>RL10_META3</name>
<reference key="1">
    <citation type="submission" date="2007-06" db="EMBL/GenBank/DDBJ databases">
        <title>Complete sequence of Methanococcus aeolicus Nankai-3.</title>
        <authorList>
            <consortium name="US DOE Joint Genome Institute"/>
            <person name="Copeland A."/>
            <person name="Lucas S."/>
            <person name="Lapidus A."/>
            <person name="Barry K."/>
            <person name="Glavina del Rio T."/>
            <person name="Dalin E."/>
            <person name="Tice H."/>
            <person name="Pitluck S."/>
            <person name="Chain P."/>
            <person name="Malfatti S."/>
            <person name="Shin M."/>
            <person name="Vergez L."/>
            <person name="Schmutz J."/>
            <person name="Larimer F."/>
            <person name="Land M."/>
            <person name="Hauser L."/>
            <person name="Kyrpides N."/>
            <person name="Lykidis A."/>
            <person name="Sieprawska-Lupa M."/>
            <person name="Whitman W.B."/>
            <person name="Richardson P."/>
        </authorList>
    </citation>
    <scope>NUCLEOTIDE SEQUENCE [LARGE SCALE GENOMIC DNA]</scope>
    <source>
        <strain>ATCC BAA-1280 / DSM 17508 / OCM 812 / Nankai-3</strain>
    </source>
</reference>
<keyword id="KW-0687">Ribonucleoprotein</keyword>
<keyword id="KW-0689">Ribosomal protein</keyword>
<keyword id="KW-0694">RNA-binding</keyword>
<keyword id="KW-0699">rRNA-binding</keyword>
<sequence>MIVAEEHKIAPWKIEEVNNLKKLLKEGQVIALVDMMEVPAVQLQEIRDNIRDLMTLRMSRNTLIKRAIEELAEESNDPKFAKLAECLERGAAIVITDMNPFKLYKTLEDGKAPAPIKAGAIAPSDIVVEAGSTGMPPGPFLGELKGAGLPAVIDKGKIAIKDDTVIVKEGEVVSPKVAVVLSALGIKPTKVGLDLLAAYEDGIVYTSDVLKIDEEEFVQNIQSAFTSAFNLSVNAAIPTTETIETILQKAFTEAKAVSIESAFITDKTVDDILGKAYAQMLSVASEAGEEALDDDLKERVSSTASAVEAKEEEAPKEEKEEEKEEEEEAPAAGLGMLF</sequence>
<feature type="chain" id="PRO_1000006785" description="Large ribosomal subunit protein uL10">
    <location>
        <begin position="1"/>
        <end position="338"/>
    </location>
</feature>
<feature type="region of interest" description="Disordered" evidence="2">
    <location>
        <begin position="292"/>
        <end position="338"/>
    </location>
</feature>
<feature type="compositionally biased region" description="Basic and acidic residues" evidence="2">
    <location>
        <begin position="308"/>
        <end position="318"/>
    </location>
</feature>
<feature type="compositionally biased region" description="Acidic residues" evidence="2">
    <location>
        <begin position="319"/>
        <end position="329"/>
    </location>
</feature>
<gene>
    <name evidence="1" type="primary">rpl10</name>
    <name evidence="1" type="synonym">rplP0</name>
    <name type="ordered locus">Maeo_0188</name>
</gene>
<comment type="function">
    <text evidence="1">Forms part of the ribosomal stalk, playing a central role in the interaction of the ribosome with GTP-bound translation factors.</text>
</comment>
<comment type="subunit">
    <text evidence="1">Part of the 50S ribosomal subunit. Forms part of the ribosomal stalk which helps the ribosome interact with GTP-bound translation factors. Forms a heptameric L10(L12)2(L12)2(L12)2 complex, where L10 forms an elongated spine to which the L12 dimers bind in a sequential fashion.</text>
</comment>
<comment type="similarity">
    <text evidence="1">Belongs to the universal ribosomal protein uL10 family.</text>
</comment>
<protein>
    <recommendedName>
        <fullName evidence="1">Large ribosomal subunit protein uL10</fullName>
    </recommendedName>
    <alternativeName>
        <fullName evidence="3">50S ribosomal protein L10</fullName>
    </alternativeName>
    <alternativeName>
        <fullName evidence="1">Acidic ribosomal protein P0 homolog</fullName>
    </alternativeName>
</protein>
<evidence type="ECO:0000255" key="1">
    <source>
        <dbReference type="HAMAP-Rule" id="MF_00280"/>
    </source>
</evidence>
<evidence type="ECO:0000256" key="2">
    <source>
        <dbReference type="SAM" id="MobiDB-lite"/>
    </source>
</evidence>
<evidence type="ECO:0000305" key="3"/>
<organism>
    <name type="scientific">Methanococcus aeolicus (strain ATCC BAA-1280 / DSM 17508 / OCM 812 / Nankai-3)</name>
    <dbReference type="NCBI Taxonomy" id="419665"/>
    <lineage>
        <taxon>Archaea</taxon>
        <taxon>Methanobacteriati</taxon>
        <taxon>Methanobacteriota</taxon>
        <taxon>Methanomada group</taxon>
        <taxon>Methanococci</taxon>
        <taxon>Methanococcales</taxon>
        <taxon>Methanococcaceae</taxon>
        <taxon>Methanococcus</taxon>
    </lineage>
</organism>
<dbReference type="EMBL" id="CP000743">
    <property type="protein sequence ID" value="ABR55780.1"/>
    <property type="molecule type" value="Genomic_DNA"/>
</dbReference>
<dbReference type="RefSeq" id="WP_011972912.1">
    <property type="nucleotide sequence ID" value="NC_009635.1"/>
</dbReference>
<dbReference type="SMR" id="A6UTF8"/>
<dbReference type="STRING" id="419665.Maeo_0188"/>
<dbReference type="GeneID" id="5326549"/>
<dbReference type="KEGG" id="mae:Maeo_0188"/>
<dbReference type="eggNOG" id="arCOG04288">
    <property type="taxonomic scope" value="Archaea"/>
</dbReference>
<dbReference type="HOGENOM" id="CLU_053173_0_0_2"/>
<dbReference type="OrthoDB" id="30930at2157"/>
<dbReference type="Proteomes" id="UP000001106">
    <property type="component" value="Chromosome"/>
</dbReference>
<dbReference type="GO" id="GO:0022625">
    <property type="term" value="C:cytosolic large ribosomal subunit"/>
    <property type="evidence" value="ECO:0007669"/>
    <property type="project" value="TreeGrafter"/>
</dbReference>
<dbReference type="GO" id="GO:0070180">
    <property type="term" value="F:large ribosomal subunit rRNA binding"/>
    <property type="evidence" value="ECO:0007669"/>
    <property type="project" value="UniProtKB-UniRule"/>
</dbReference>
<dbReference type="GO" id="GO:0003735">
    <property type="term" value="F:structural constituent of ribosome"/>
    <property type="evidence" value="ECO:0007669"/>
    <property type="project" value="TreeGrafter"/>
</dbReference>
<dbReference type="GO" id="GO:0002181">
    <property type="term" value="P:cytoplasmic translation"/>
    <property type="evidence" value="ECO:0007669"/>
    <property type="project" value="TreeGrafter"/>
</dbReference>
<dbReference type="GO" id="GO:0000027">
    <property type="term" value="P:ribosomal large subunit assembly"/>
    <property type="evidence" value="ECO:0007669"/>
    <property type="project" value="TreeGrafter"/>
</dbReference>
<dbReference type="CDD" id="cd05795">
    <property type="entry name" value="Ribosomal_P0_L10e"/>
    <property type="match status" value="1"/>
</dbReference>
<dbReference type="Gene3D" id="3.30.70.1730">
    <property type="match status" value="1"/>
</dbReference>
<dbReference type="Gene3D" id="3.90.105.20">
    <property type="match status" value="1"/>
</dbReference>
<dbReference type="Gene3D" id="6.10.140.760">
    <property type="match status" value="1"/>
</dbReference>
<dbReference type="HAMAP" id="MF_00280">
    <property type="entry name" value="Ribosomal_uL10_arch"/>
    <property type="match status" value="1"/>
</dbReference>
<dbReference type="InterPro" id="IPR050323">
    <property type="entry name" value="Ribosomal_protein_uL10"/>
</dbReference>
<dbReference type="InterPro" id="IPR001790">
    <property type="entry name" value="Ribosomal_uL10"/>
</dbReference>
<dbReference type="InterPro" id="IPR040637">
    <property type="entry name" value="Ribosomal_uL10-like_insert"/>
</dbReference>
<dbReference type="InterPro" id="IPR043164">
    <property type="entry name" value="Ribosomal_uL10-like_insert_sf"/>
</dbReference>
<dbReference type="InterPro" id="IPR043141">
    <property type="entry name" value="Ribosomal_uL10-like_sf"/>
</dbReference>
<dbReference type="InterPro" id="IPR022909">
    <property type="entry name" value="Ribosomal_uL10_arc"/>
</dbReference>
<dbReference type="NCBIfam" id="NF003096">
    <property type="entry name" value="PRK04019.1-2"/>
    <property type="match status" value="1"/>
</dbReference>
<dbReference type="NCBIfam" id="NF003098">
    <property type="entry name" value="PRK04019.1-5"/>
    <property type="match status" value="1"/>
</dbReference>
<dbReference type="PANTHER" id="PTHR45699">
    <property type="entry name" value="60S ACIDIC RIBOSOMAL PROTEIN P0"/>
    <property type="match status" value="1"/>
</dbReference>
<dbReference type="PANTHER" id="PTHR45699:SF3">
    <property type="entry name" value="LARGE RIBOSOMAL SUBUNIT PROTEIN UL10"/>
    <property type="match status" value="1"/>
</dbReference>
<dbReference type="Pfam" id="PF00466">
    <property type="entry name" value="Ribosomal_L10"/>
    <property type="match status" value="1"/>
</dbReference>
<dbReference type="Pfam" id="PF17777">
    <property type="entry name" value="RL10P_insert"/>
    <property type="match status" value="1"/>
</dbReference>
<dbReference type="SUPFAM" id="SSF160369">
    <property type="entry name" value="Ribosomal protein L10-like"/>
    <property type="match status" value="1"/>
</dbReference>
<proteinExistence type="inferred from homology"/>
<accession>A6UTF8</accession>